<proteinExistence type="evidence at protein level"/>
<sequence length="158" mass="17155">MTPAIDLLKKQKIPFILHTYDHDPNNQHFGDEAAEKLGIDPNRSFKTLLVAENGDQKKLACFVLATANMLNLKKAAKSIGVKKVEMADKDAAQKSTGYLVGGISPLGQKKRVKTVINSTALEFETIYVSGGKRGLSVEIAPQDLAKVLGAEFTDIVDE</sequence>
<reference key="1">
    <citation type="journal article" date="1995" name="Science">
        <title>Whole-genome random sequencing and assembly of Haemophilus influenzae Rd.</title>
        <authorList>
            <person name="Fleischmann R.D."/>
            <person name="Adams M.D."/>
            <person name="White O."/>
            <person name="Clayton R.A."/>
            <person name="Kirkness E.F."/>
            <person name="Kerlavage A.R."/>
            <person name="Bult C.J."/>
            <person name="Tomb J.-F."/>
            <person name="Dougherty B.A."/>
            <person name="Merrick J.M."/>
            <person name="McKenney K."/>
            <person name="Sutton G.G."/>
            <person name="FitzHugh W."/>
            <person name="Fields C.A."/>
            <person name="Gocayne J.D."/>
            <person name="Scott J.D."/>
            <person name="Shirley R."/>
            <person name="Liu L.-I."/>
            <person name="Glodek A."/>
            <person name="Kelley J.M."/>
            <person name="Weidman J.F."/>
            <person name="Phillips C.A."/>
            <person name="Spriggs T."/>
            <person name="Hedblom E."/>
            <person name="Cotton M.D."/>
            <person name="Utterback T.R."/>
            <person name="Hanna M.C."/>
            <person name="Nguyen D.T."/>
            <person name="Saudek D.M."/>
            <person name="Brandon R.C."/>
            <person name="Fine L.D."/>
            <person name="Fritchman J.L."/>
            <person name="Fuhrmann J.L."/>
            <person name="Geoghagen N.S.M."/>
            <person name="Gnehm C.L."/>
            <person name="McDonald L.A."/>
            <person name="Small K.V."/>
            <person name="Fraser C.M."/>
            <person name="Smith H.O."/>
            <person name="Venter J.C."/>
        </authorList>
    </citation>
    <scope>NUCLEOTIDE SEQUENCE [LARGE SCALE GENOMIC DNA]</scope>
    <source>
        <strain>ATCC 51907 / DSM 11121 / KW20 / Rd</strain>
    </source>
</reference>
<reference key="2">
    <citation type="submission" date="1999-08" db="EMBL/GenBank/DDBJ databases">
        <authorList>
            <person name="Bonander N."/>
            <person name="Eisenstein E."/>
        </authorList>
    </citation>
    <scope>NUCLEOTIDE SEQUENCE [GENOMIC DNA]</scope>
    <source>
        <strain>ATCC 51907 / DSM 11121 / KW20 / Rd</strain>
    </source>
</reference>
<reference key="3">
    <citation type="journal article" date="2004" name="J. Biol. Chem.">
        <title>Trans-editing of Cys-tRNAPro by Haemophilus influenzae YbaK protein.</title>
        <authorList>
            <person name="An S."/>
            <person name="Musier-Forsyth K."/>
        </authorList>
    </citation>
    <scope>FUNCTION IN CYS-TRNA(PRO) EDITING</scope>
    <scope>MUTAGENESIS OF LYS-46</scope>
</reference>
<reference key="4">
    <citation type="journal article" date="2005" name="J. Biol. Chem.">
        <title>The bacterial YbaK protein is a Cys-tRNAPro and Cys-tRNA Cys deacylase.</title>
        <authorList>
            <person name="Ruan B."/>
            <person name="Soll D."/>
        </authorList>
    </citation>
    <scope>FUNCTION AS A DEACYLASE</scope>
    <scope>SUBSTRATE SPECIFICITY</scope>
</reference>
<reference key="5">
    <citation type="journal article" date="2005" name="J. Biol. Chem.">
        <title>Cys-tRNA(Pro) editing by Haemophilus influenzae YbaK via a novel synthetase.YbaK.tRNA ternary complex.</title>
        <authorList>
            <person name="An S."/>
            <person name="Musier-Forsyth K."/>
        </authorList>
    </citation>
    <scope>SUBUNIT</scope>
</reference>
<reference key="6">
    <citation type="journal article" date="2011" name="J. Biol. Chem.">
        <title>Substrate-mediated fidelity mechanism ensures accurate decoding of proline codons.</title>
        <authorList>
            <person name="So B.R."/>
            <person name="An S."/>
            <person name="Kumar S."/>
            <person name="Das M."/>
            <person name="Turner D.A."/>
            <person name="Hadad C.M."/>
            <person name="Musier-Forsyth K."/>
        </authorList>
    </citation>
    <scope>FUNCTION</scope>
    <scope>REACTION MECHANISM</scope>
    <scope>SUBSTRATE SPECIFICITY</scope>
    <scope>MUTAGENESIS OF TYR-20; PHE-29; LYS-46; THR-47; GLY-101; SER-129; GLY-131; GLY-134 AND SER-136</scope>
</reference>
<reference key="7">
    <citation type="journal article" date="2000" name="Proteins">
        <title>Crystal structure of YbaK protein from Haemophilus influenzae (HI1434) at 1.8-A resolution: functional implications.</title>
        <authorList>
            <person name="Zhang H."/>
            <person name="Huang K."/>
            <person name="Li Z."/>
            <person name="Banerjei L."/>
            <person name="Fisher K.E."/>
            <person name="Grishin N.V."/>
            <person name="Eisenstein E."/>
            <person name="Herzberg O."/>
        </authorList>
    </citation>
    <scope>X-RAY CRYSTALLOGRAPHY (1.8 ANGSTROMS)</scope>
</reference>
<gene>
    <name type="primary">ybaK</name>
    <name type="ordered locus">HI_1434</name>
</gene>
<organism>
    <name type="scientific">Haemophilus influenzae (strain ATCC 51907 / DSM 11121 / KW20 / Rd)</name>
    <dbReference type="NCBI Taxonomy" id="71421"/>
    <lineage>
        <taxon>Bacteria</taxon>
        <taxon>Pseudomonadati</taxon>
        <taxon>Pseudomonadota</taxon>
        <taxon>Gammaproteobacteria</taxon>
        <taxon>Pasteurellales</taxon>
        <taxon>Pasteurellaceae</taxon>
        <taxon>Haemophilus</taxon>
    </lineage>
</organism>
<accession>P45202</accession>
<accession>Q9RP30</accession>
<protein>
    <recommendedName>
        <fullName>Cys-tRNA(Pro)/Cys-tRNA(Cys) deacylase YbaK</fullName>
        <ecNumber>4.2.-.-</ecNumber>
    </recommendedName>
</protein>
<feature type="chain" id="PRO_0000168623" description="Cys-tRNA(Pro)/Cys-tRNA(Cys) deacylase YbaK">
    <location>
        <begin position="1"/>
        <end position="158"/>
    </location>
</feature>
<feature type="site" description="Participates in proton transfer during catalysis" evidence="1">
    <location>
        <position position="29"/>
    </location>
</feature>
<feature type="mutagenesis site" description="45-fold decrease in Cys-tRNA(Pro) deacylation activity." evidence="5">
    <original>Y</original>
    <variation>A</variation>
    <location>
        <position position="20"/>
    </location>
</feature>
<feature type="mutagenesis site" description="29-fold decrease in Cys-tRNA(Pro) deacylation activity." evidence="5">
    <original>F</original>
    <variation>A</variation>
    <location>
        <position position="29"/>
    </location>
</feature>
<feature type="mutagenesis site" description="66-fold decrease in Cys-tRNA(Pro) deacylation activity." evidence="2 5">
    <original>K</original>
    <variation>A</variation>
    <location>
        <position position="46"/>
    </location>
</feature>
<feature type="mutagenesis site" description="38-fold decrease in Cys-tRNA(Pro) deacylation activity." evidence="2 5">
    <original>K</original>
    <variation>I</variation>
    <location>
        <position position="46"/>
    </location>
</feature>
<feature type="mutagenesis site" description="44-fold decrease in Cys-tRNA(Pro) deacylation activity." evidence="2 5">
    <original>K</original>
    <variation>R</variation>
    <location>
        <position position="46"/>
    </location>
</feature>
<feature type="mutagenesis site" description="21-fold decrease in Cys-tRNA(Pro) deacylation activity." evidence="5">
    <original>T</original>
    <variation>A</variation>
    <location>
        <position position="47"/>
    </location>
</feature>
<feature type="mutagenesis site" description="36-fold decrease in Cys-tRNA(Pro) deacylation activity." evidence="5">
    <original>G</original>
    <variation>A</variation>
    <location>
        <position position="101"/>
    </location>
</feature>
<feature type="mutagenesis site" description="5.6-fold decrease in Cys-tRNA(Pro) deacylation activity." evidence="5">
    <original>S</original>
    <variation>A</variation>
    <location>
        <position position="129"/>
    </location>
</feature>
<feature type="mutagenesis site" description="28-fold decrease in Cys-tRNA(Pro) deacylation activity." evidence="5">
    <original>G</original>
    <variation>A</variation>
    <location>
        <position position="131"/>
    </location>
</feature>
<feature type="mutagenesis site" description="7.4-fold decrease in Cys-tRNA(Pro) deacylation activity." evidence="5">
    <original>G</original>
    <variation>A</variation>
    <location>
        <position position="134"/>
    </location>
</feature>
<feature type="mutagenesis site" description="3.6-fold decrease in Cys-tRNA(Pro) deacylation activity." evidence="5">
    <original>S</original>
    <variation>A</variation>
    <location>
        <position position="136"/>
    </location>
</feature>
<feature type="mutagenesis site" description="16-fold decrease in Cys-tRNA(Pro) deacylation activity." evidence="5">
    <original>S</original>
    <variation>H</variation>
    <location>
        <position position="136"/>
    </location>
</feature>
<feature type="sequence conflict" description="In Ref. 1; AAC23081." evidence="6" ref="1">
    <original>N</original>
    <variation>K</variation>
    <location>
        <position position="117"/>
    </location>
</feature>
<feature type="helix" evidence="8">
    <location>
        <begin position="3"/>
        <end position="11"/>
    </location>
</feature>
<feature type="strand" evidence="8">
    <location>
        <begin position="16"/>
        <end position="19"/>
    </location>
</feature>
<feature type="helix" evidence="8">
    <location>
        <begin position="32"/>
        <end position="37"/>
    </location>
</feature>
<feature type="helix" evidence="8">
    <location>
        <begin position="41"/>
        <end position="43"/>
    </location>
</feature>
<feature type="strand" evidence="8">
    <location>
        <begin position="44"/>
        <end position="52"/>
    </location>
</feature>
<feature type="strand" evidence="8">
    <location>
        <begin position="58"/>
        <end position="65"/>
    </location>
</feature>
<feature type="helix" evidence="8">
    <location>
        <begin position="72"/>
        <end position="78"/>
    </location>
</feature>
<feature type="strand" evidence="8">
    <location>
        <begin position="84"/>
        <end position="86"/>
    </location>
</feature>
<feature type="helix" evidence="8">
    <location>
        <begin position="89"/>
        <end position="96"/>
    </location>
</feature>
<feature type="strand" evidence="8">
    <location>
        <begin position="105"/>
        <end position="107"/>
    </location>
</feature>
<feature type="strand" evidence="8">
    <location>
        <begin position="114"/>
        <end position="117"/>
    </location>
</feature>
<feature type="helix" evidence="8">
    <location>
        <begin position="118"/>
        <end position="122"/>
    </location>
</feature>
<feature type="strand" evidence="8">
    <location>
        <begin position="126"/>
        <end position="129"/>
    </location>
</feature>
<feature type="strand" evidence="8">
    <location>
        <begin position="135"/>
        <end position="139"/>
    </location>
</feature>
<feature type="helix" evidence="8">
    <location>
        <begin position="141"/>
        <end position="148"/>
    </location>
</feature>
<feature type="strand" evidence="8">
    <location>
        <begin position="151"/>
        <end position="153"/>
    </location>
</feature>
<evidence type="ECO:0000250" key="1"/>
<evidence type="ECO:0000269" key="2">
    <source>
    </source>
</evidence>
<evidence type="ECO:0000269" key="3">
    <source>
    </source>
</evidence>
<evidence type="ECO:0000269" key="4">
    <source>
    </source>
</evidence>
<evidence type="ECO:0000269" key="5">
    <source>
    </source>
</evidence>
<evidence type="ECO:0000305" key="6"/>
<evidence type="ECO:0000305" key="7">
    <source>
    </source>
</evidence>
<evidence type="ECO:0007829" key="8">
    <source>
        <dbReference type="PDB" id="1DBU"/>
    </source>
</evidence>
<keyword id="KW-0002">3D-structure</keyword>
<keyword id="KW-0963">Cytoplasm</keyword>
<keyword id="KW-0456">Lyase</keyword>
<keyword id="KW-0648">Protein biosynthesis</keyword>
<keyword id="KW-1185">Reference proteome</keyword>
<name>YBAK_HAEIN</name>
<dbReference type="EC" id="4.2.-.-"/>
<dbReference type="EMBL" id="L42023">
    <property type="protein sequence ID" value="AAC23081.1"/>
    <property type="molecule type" value="Genomic_DNA"/>
</dbReference>
<dbReference type="EMBL" id="AF174386">
    <property type="protein sequence ID" value="AAD54290.1"/>
    <property type="molecule type" value="Genomic_DNA"/>
</dbReference>
<dbReference type="PIR" id="H64171">
    <property type="entry name" value="H64171"/>
</dbReference>
<dbReference type="RefSeq" id="NP_439583.1">
    <property type="nucleotide sequence ID" value="NC_000907.1"/>
</dbReference>
<dbReference type="PDB" id="1DBU">
    <property type="method" value="X-ray"/>
    <property type="resolution" value="1.80 A"/>
    <property type="chains" value="A=1-158"/>
</dbReference>
<dbReference type="PDB" id="1DBX">
    <property type="method" value="X-ray"/>
    <property type="resolution" value="1.80 A"/>
    <property type="chains" value="A/B=1-158"/>
</dbReference>
<dbReference type="PDBsum" id="1DBU"/>
<dbReference type="PDBsum" id="1DBX"/>
<dbReference type="SMR" id="P45202"/>
<dbReference type="STRING" id="71421.HI_1434"/>
<dbReference type="EnsemblBacteria" id="AAC23081">
    <property type="protein sequence ID" value="AAC23081"/>
    <property type="gene ID" value="HI_1434"/>
</dbReference>
<dbReference type="KEGG" id="hin:HI_1434"/>
<dbReference type="PATRIC" id="fig|71421.8.peg.1491"/>
<dbReference type="eggNOG" id="COG2606">
    <property type="taxonomic scope" value="Bacteria"/>
</dbReference>
<dbReference type="HOGENOM" id="CLU_094875_1_1_6"/>
<dbReference type="OrthoDB" id="9809296at2"/>
<dbReference type="PhylomeDB" id="P45202"/>
<dbReference type="BioCyc" id="HINF71421:G1GJ1-1457-MONOMER"/>
<dbReference type="EvolutionaryTrace" id="P45202"/>
<dbReference type="Proteomes" id="UP000000579">
    <property type="component" value="Chromosome"/>
</dbReference>
<dbReference type="GO" id="GO:0005737">
    <property type="term" value="C:cytoplasm"/>
    <property type="evidence" value="ECO:0007669"/>
    <property type="project" value="UniProtKB-SubCell"/>
</dbReference>
<dbReference type="GO" id="GO:0043906">
    <property type="term" value="F:Ala-tRNA(Pro) deacylase activity"/>
    <property type="evidence" value="ECO:0000314"/>
    <property type="project" value="UniProtKB"/>
</dbReference>
<dbReference type="GO" id="GO:0016829">
    <property type="term" value="F:lyase activity"/>
    <property type="evidence" value="ECO:0007669"/>
    <property type="project" value="UniProtKB-KW"/>
</dbReference>
<dbReference type="GO" id="GO:0006412">
    <property type="term" value="P:translation"/>
    <property type="evidence" value="ECO:0007669"/>
    <property type="project" value="UniProtKB-KW"/>
</dbReference>
<dbReference type="CDD" id="cd00002">
    <property type="entry name" value="YbaK_deacylase"/>
    <property type="match status" value="1"/>
</dbReference>
<dbReference type="FunFam" id="3.90.960.10:FF:000002">
    <property type="entry name" value="Cys-tRNA(Pro)/Cys-tRNA(Cys) deacylase"/>
    <property type="match status" value="1"/>
</dbReference>
<dbReference type="Gene3D" id="3.90.960.10">
    <property type="entry name" value="YbaK/aminoacyl-tRNA synthetase-associated domain"/>
    <property type="match status" value="1"/>
</dbReference>
<dbReference type="InterPro" id="IPR004369">
    <property type="entry name" value="Prolyl-tRNA_editing_YbaK/EbsC"/>
</dbReference>
<dbReference type="InterPro" id="IPR036754">
    <property type="entry name" value="YbaK/aa-tRNA-synt-asso_dom_sf"/>
</dbReference>
<dbReference type="InterPro" id="IPR007214">
    <property type="entry name" value="YbaK/aa-tRNA-synth-assoc-dom"/>
</dbReference>
<dbReference type="NCBIfam" id="TIGR00011">
    <property type="entry name" value="YbaK_EbsC"/>
    <property type="match status" value="1"/>
</dbReference>
<dbReference type="PANTHER" id="PTHR30411:SF0">
    <property type="entry name" value="CYS-TRNA(PRO)_CYS-TRNA(CYS) DEACYLASE YBAK"/>
    <property type="match status" value="1"/>
</dbReference>
<dbReference type="PANTHER" id="PTHR30411">
    <property type="entry name" value="CYTOPLASMIC PROTEIN"/>
    <property type="match status" value="1"/>
</dbReference>
<dbReference type="Pfam" id="PF04073">
    <property type="entry name" value="tRNA_edit"/>
    <property type="match status" value="1"/>
</dbReference>
<dbReference type="PIRSF" id="PIRSF006181">
    <property type="entry name" value="EbsC_YbaK"/>
    <property type="match status" value="1"/>
</dbReference>
<dbReference type="SUPFAM" id="SSF55826">
    <property type="entry name" value="YbaK/ProRS associated domain"/>
    <property type="match status" value="1"/>
</dbReference>
<comment type="function">
    <text evidence="2 3 5">Functions in trans to edit the amino acid from incorrectly charged Cys-tRNA(Pro) via a Cys-tRNA(Pro) deacylase activity. Probably compensates for the lack of Cys-tRNA(Pro) editing by ProRS. Is also able to deacylate Cys-tRNA(Cys), and displays weak deacylase activity in vitro against Gly-tRNA(Gly), as well as, at higher concentrations, some other correctly charged tRNAs. Does not cleave Pro-tRNA(Pro).</text>
</comment>
<comment type="subunit">
    <text evidence="4">May form a tertiary complex with ProRS and tRNA(Pro), as it can be cross-linked to E.coli ProRS and to E.coli tRNA(Pro) in vitro. It cannot compete with Ef-Tu for aminoacyl-tRNA binding, suggesting it acts before release of the charged aminoacyl-tRNA from the synthetase.</text>
</comment>
<comment type="subcellular location">
    <subcellularLocation>
        <location evidence="1">Cytoplasm</location>
    </subcellularLocation>
</comment>
<comment type="miscellaneous">
    <text evidence="7">Reaction mechanism involves exclusion of catalytic water from the active site and substrate-mediated catalysis: the sulfhydryl side chain of the Cys substrate acts as a nucleophile and attacks the carbonyl center of the ester bond, leading to the cleavage of the Cys-tRNA ester bond and formation of a cyclic cysteine thiolactone intermediate. In contrast, the INS editing domain of ProRS catalyzes Ala-tRNA(Pro) hydrolysis via nucleophilic attack by a catalytic water molecule (PubMed:21768119).</text>
</comment>
<comment type="similarity">
    <text evidence="6">Belongs to the prolyl-tRNA editing family. YbaK/EbsC subfamily.</text>
</comment>